<reference key="1">
    <citation type="journal article" date="2006" name="J. Bacteriol.">
        <title>Comparison of the genome sequence of the poultry pathogen Bordetella avium with those of B. bronchiseptica, B. pertussis, and B. parapertussis reveals extensive diversity in surface structures associated with host interaction.</title>
        <authorList>
            <person name="Sebaihia M."/>
            <person name="Preston A."/>
            <person name="Maskell D.J."/>
            <person name="Kuzmiak H."/>
            <person name="Connell T.D."/>
            <person name="King N.D."/>
            <person name="Orndorff P.E."/>
            <person name="Miyamoto D.M."/>
            <person name="Thomson N.R."/>
            <person name="Harris D."/>
            <person name="Goble A."/>
            <person name="Lord A."/>
            <person name="Murphy L."/>
            <person name="Quail M.A."/>
            <person name="Rutter S."/>
            <person name="Squares R."/>
            <person name="Squares S."/>
            <person name="Woodward J."/>
            <person name="Parkhill J."/>
            <person name="Temple L.M."/>
        </authorList>
    </citation>
    <scope>NUCLEOTIDE SEQUENCE [LARGE SCALE GENOMIC DNA]</scope>
    <source>
        <strain>197N</strain>
    </source>
</reference>
<protein>
    <recommendedName>
        <fullName evidence="1">Small ribosomal subunit protein bS20</fullName>
    </recommendedName>
    <alternativeName>
        <fullName evidence="3">30S ribosomal protein S20</fullName>
    </alternativeName>
</protein>
<evidence type="ECO:0000255" key="1">
    <source>
        <dbReference type="HAMAP-Rule" id="MF_00500"/>
    </source>
</evidence>
<evidence type="ECO:0000256" key="2">
    <source>
        <dbReference type="SAM" id="MobiDB-lite"/>
    </source>
</evidence>
<evidence type="ECO:0000305" key="3"/>
<name>RS20_BORA1</name>
<organism>
    <name type="scientific">Bordetella avium (strain 197N)</name>
    <dbReference type="NCBI Taxonomy" id="360910"/>
    <lineage>
        <taxon>Bacteria</taxon>
        <taxon>Pseudomonadati</taxon>
        <taxon>Pseudomonadota</taxon>
        <taxon>Betaproteobacteria</taxon>
        <taxon>Burkholderiales</taxon>
        <taxon>Alcaligenaceae</taxon>
        <taxon>Bordetella</taxon>
    </lineage>
</organism>
<gene>
    <name evidence="1" type="primary">rpsT</name>
    <name type="ordered locus">BAV2107</name>
</gene>
<accession>Q2KZD7</accession>
<comment type="function">
    <text evidence="1">Binds directly to 16S ribosomal RNA.</text>
</comment>
<comment type="similarity">
    <text evidence="1">Belongs to the bacterial ribosomal protein bS20 family.</text>
</comment>
<sequence>MANTAQARKRARQSVERNKHNSSLRSMLRTAIKRVRQAIATGDKAVAGETLRKASSVIDRVADKNIIHKNKAARHKSRLAAAVKALA</sequence>
<dbReference type="EMBL" id="AM167904">
    <property type="protein sequence ID" value="CAJ49717.1"/>
    <property type="molecule type" value="Genomic_DNA"/>
</dbReference>
<dbReference type="RefSeq" id="WP_012417773.1">
    <property type="nucleotide sequence ID" value="NC_010645.1"/>
</dbReference>
<dbReference type="SMR" id="Q2KZD7"/>
<dbReference type="STRING" id="360910.BAV2107"/>
<dbReference type="GeneID" id="92994262"/>
<dbReference type="KEGG" id="bav:BAV2107"/>
<dbReference type="eggNOG" id="COG0268">
    <property type="taxonomic scope" value="Bacteria"/>
</dbReference>
<dbReference type="HOGENOM" id="CLU_160655_4_0_4"/>
<dbReference type="OrthoDB" id="9807974at2"/>
<dbReference type="Proteomes" id="UP000001977">
    <property type="component" value="Chromosome"/>
</dbReference>
<dbReference type="GO" id="GO:0005829">
    <property type="term" value="C:cytosol"/>
    <property type="evidence" value="ECO:0007669"/>
    <property type="project" value="TreeGrafter"/>
</dbReference>
<dbReference type="GO" id="GO:0015935">
    <property type="term" value="C:small ribosomal subunit"/>
    <property type="evidence" value="ECO:0007669"/>
    <property type="project" value="TreeGrafter"/>
</dbReference>
<dbReference type="GO" id="GO:0070181">
    <property type="term" value="F:small ribosomal subunit rRNA binding"/>
    <property type="evidence" value="ECO:0007669"/>
    <property type="project" value="TreeGrafter"/>
</dbReference>
<dbReference type="GO" id="GO:0003735">
    <property type="term" value="F:structural constituent of ribosome"/>
    <property type="evidence" value="ECO:0007669"/>
    <property type="project" value="InterPro"/>
</dbReference>
<dbReference type="GO" id="GO:0006412">
    <property type="term" value="P:translation"/>
    <property type="evidence" value="ECO:0007669"/>
    <property type="project" value="UniProtKB-UniRule"/>
</dbReference>
<dbReference type="FunFam" id="1.20.58.110:FF:000001">
    <property type="entry name" value="30S ribosomal protein S20"/>
    <property type="match status" value="1"/>
</dbReference>
<dbReference type="Gene3D" id="1.20.58.110">
    <property type="entry name" value="Ribosomal protein S20"/>
    <property type="match status" value="1"/>
</dbReference>
<dbReference type="HAMAP" id="MF_00500">
    <property type="entry name" value="Ribosomal_bS20"/>
    <property type="match status" value="1"/>
</dbReference>
<dbReference type="InterPro" id="IPR002583">
    <property type="entry name" value="Ribosomal_bS20"/>
</dbReference>
<dbReference type="InterPro" id="IPR036510">
    <property type="entry name" value="Ribosomal_bS20_sf"/>
</dbReference>
<dbReference type="NCBIfam" id="TIGR00029">
    <property type="entry name" value="S20"/>
    <property type="match status" value="1"/>
</dbReference>
<dbReference type="PANTHER" id="PTHR33398">
    <property type="entry name" value="30S RIBOSOMAL PROTEIN S20"/>
    <property type="match status" value="1"/>
</dbReference>
<dbReference type="PANTHER" id="PTHR33398:SF1">
    <property type="entry name" value="SMALL RIBOSOMAL SUBUNIT PROTEIN BS20C"/>
    <property type="match status" value="1"/>
</dbReference>
<dbReference type="Pfam" id="PF01649">
    <property type="entry name" value="Ribosomal_S20p"/>
    <property type="match status" value="1"/>
</dbReference>
<dbReference type="SUPFAM" id="SSF46992">
    <property type="entry name" value="Ribosomal protein S20"/>
    <property type="match status" value="1"/>
</dbReference>
<proteinExistence type="inferred from homology"/>
<keyword id="KW-1185">Reference proteome</keyword>
<keyword id="KW-0687">Ribonucleoprotein</keyword>
<keyword id="KW-0689">Ribosomal protein</keyword>
<keyword id="KW-0694">RNA-binding</keyword>
<keyword id="KW-0699">rRNA-binding</keyword>
<feature type="chain" id="PRO_0000236424" description="Small ribosomal subunit protein bS20">
    <location>
        <begin position="1"/>
        <end position="87"/>
    </location>
</feature>
<feature type="region of interest" description="Disordered" evidence="2">
    <location>
        <begin position="1"/>
        <end position="24"/>
    </location>
</feature>